<name>COBQ_ALLAM</name>
<proteinExistence type="inferred from homology"/>
<evidence type="ECO:0000255" key="1">
    <source>
        <dbReference type="HAMAP-Rule" id="MF_00028"/>
    </source>
</evidence>
<gene>
    <name evidence="1" type="primary">cobQ</name>
    <name type="ordered locus">Avi_2571</name>
</gene>
<reference key="1">
    <citation type="journal article" date="2009" name="J. Bacteriol.">
        <title>Genome sequences of three Agrobacterium biovars help elucidate the evolution of multichromosome genomes in bacteria.</title>
        <authorList>
            <person name="Slater S.C."/>
            <person name="Goldman B.S."/>
            <person name="Goodner B."/>
            <person name="Setubal J.C."/>
            <person name="Farrand S.K."/>
            <person name="Nester E.W."/>
            <person name="Burr T.J."/>
            <person name="Banta L."/>
            <person name="Dickerman A.W."/>
            <person name="Paulsen I."/>
            <person name="Otten L."/>
            <person name="Suen G."/>
            <person name="Welch R."/>
            <person name="Almeida N.F."/>
            <person name="Arnold F."/>
            <person name="Burton O.T."/>
            <person name="Du Z."/>
            <person name="Ewing A."/>
            <person name="Godsy E."/>
            <person name="Heisel S."/>
            <person name="Houmiel K.L."/>
            <person name="Jhaveri J."/>
            <person name="Lu J."/>
            <person name="Miller N.M."/>
            <person name="Norton S."/>
            <person name="Chen Q."/>
            <person name="Phoolcharoen W."/>
            <person name="Ohlin V."/>
            <person name="Ondrusek D."/>
            <person name="Pride N."/>
            <person name="Stricklin S.L."/>
            <person name="Sun J."/>
            <person name="Wheeler C."/>
            <person name="Wilson L."/>
            <person name="Zhu H."/>
            <person name="Wood D.W."/>
        </authorList>
    </citation>
    <scope>NUCLEOTIDE SEQUENCE [LARGE SCALE GENOMIC DNA]</scope>
    <source>
        <strain>ATCC BAA-846 / DSM 112012 / S4</strain>
    </source>
</reference>
<feature type="chain" id="PRO_1000116897" description="Cobyric acid synthase">
    <location>
        <begin position="1"/>
        <end position="484"/>
    </location>
</feature>
<feature type="domain" description="GATase cobBQ-type" evidence="1">
    <location>
        <begin position="251"/>
        <end position="438"/>
    </location>
</feature>
<feature type="active site" description="Nucleophile" evidence="1">
    <location>
        <position position="333"/>
    </location>
</feature>
<feature type="active site" evidence="1">
    <location>
        <position position="430"/>
    </location>
</feature>
<comment type="function">
    <text evidence="1">Catalyzes amidations at positions B, D, E, and G on adenosylcobyrinic A,C-diamide. NH(2) groups are provided by glutamine, and one molecule of ATP is hydrogenolyzed for each amidation.</text>
</comment>
<comment type="pathway">
    <text evidence="1">Cofactor biosynthesis; adenosylcobalamin biosynthesis.</text>
</comment>
<comment type="similarity">
    <text evidence="1">Belongs to the CobB/CobQ family. CobQ subfamily.</text>
</comment>
<keyword id="KW-0169">Cobalamin biosynthesis</keyword>
<keyword id="KW-0315">Glutamine amidotransferase</keyword>
<keyword id="KW-1185">Reference proteome</keyword>
<dbReference type="EMBL" id="CP000633">
    <property type="protein sequence ID" value="ACM36846.1"/>
    <property type="molecule type" value="Genomic_DNA"/>
</dbReference>
<dbReference type="RefSeq" id="WP_015916267.1">
    <property type="nucleotide sequence ID" value="NC_011989.1"/>
</dbReference>
<dbReference type="SMR" id="B9JX68"/>
<dbReference type="STRING" id="311402.Avi_2571"/>
<dbReference type="KEGG" id="avi:Avi_2571"/>
<dbReference type="eggNOG" id="COG1492">
    <property type="taxonomic scope" value="Bacteria"/>
</dbReference>
<dbReference type="HOGENOM" id="CLU_019250_2_2_5"/>
<dbReference type="UniPathway" id="UPA00148"/>
<dbReference type="Proteomes" id="UP000001596">
    <property type="component" value="Chromosome 1"/>
</dbReference>
<dbReference type="GO" id="GO:0015420">
    <property type="term" value="F:ABC-type vitamin B12 transporter activity"/>
    <property type="evidence" value="ECO:0007669"/>
    <property type="project" value="UniProtKB-UniRule"/>
</dbReference>
<dbReference type="GO" id="GO:0003824">
    <property type="term" value="F:catalytic activity"/>
    <property type="evidence" value="ECO:0007669"/>
    <property type="project" value="InterPro"/>
</dbReference>
<dbReference type="GO" id="GO:0009236">
    <property type="term" value="P:cobalamin biosynthetic process"/>
    <property type="evidence" value="ECO:0007669"/>
    <property type="project" value="UniProtKB-UniRule"/>
</dbReference>
<dbReference type="CDD" id="cd05389">
    <property type="entry name" value="CobQ_N"/>
    <property type="match status" value="1"/>
</dbReference>
<dbReference type="CDD" id="cd01750">
    <property type="entry name" value="GATase1_CobQ"/>
    <property type="match status" value="1"/>
</dbReference>
<dbReference type="Gene3D" id="3.40.50.880">
    <property type="match status" value="1"/>
</dbReference>
<dbReference type="Gene3D" id="3.40.50.300">
    <property type="entry name" value="P-loop containing nucleotide triphosphate hydrolases"/>
    <property type="match status" value="1"/>
</dbReference>
<dbReference type="HAMAP" id="MF_00028">
    <property type="entry name" value="CobQ"/>
    <property type="match status" value="1"/>
</dbReference>
<dbReference type="InterPro" id="IPR029062">
    <property type="entry name" value="Class_I_gatase-like"/>
</dbReference>
<dbReference type="InterPro" id="IPR002586">
    <property type="entry name" value="CobQ/CobB/MinD/ParA_Nub-bd_dom"/>
</dbReference>
<dbReference type="InterPro" id="IPR033949">
    <property type="entry name" value="CobQ_GATase1"/>
</dbReference>
<dbReference type="InterPro" id="IPR047045">
    <property type="entry name" value="CobQ_N"/>
</dbReference>
<dbReference type="InterPro" id="IPR004459">
    <property type="entry name" value="CobQ_synth"/>
</dbReference>
<dbReference type="InterPro" id="IPR011698">
    <property type="entry name" value="GATase_3"/>
</dbReference>
<dbReference type="InterPro" id="IPR027417">
    <property type="entry name" value="P-loop_NTPase"/>
</dbReference>
<dbReference type="NCBIfam" id="TIGR00313">
    <property type="entry name" value="cobQ"/>
    <property type="match status" value="1"/>
</dbReference>
<dbReference type="NCBIfam" id="NF001989">
    <property type="entry name" value="PRK00784.1"/>
    <property type="match status" value="1"/>
</dbReference>
<dbReference type="PANTHER" id="PTHR21343:SF1">
    <property type="entry name" value="COBYRIC ACID SYNTHASE"/>
    <property type="match status" value="1"/>
</dbReference>
<dbReference type="PANTHER" id="PTHR21343">
    <property type="entry name" value="DETHIOBIOTIN SYNTHETASE"/>
    <property type="match status" value="1"/>
</dbReference>
<dbReference type="Pfam" id="PF01656">
    <property type="entry name" value="CbiA"/>
    <property type="match status" value="1"/>
</dbReference>
<dbReference type="Pfam" id="PF07685">
    <property type="entry name" value="GATase_3"/>
    <property type="match status" value="1"/>
</dbReference>
<dbReference type="SUPFAM" id="SSF52317">
    <property type="entry name" value="Class I glutamine amidotransferase-like"/>
    <property type="match status" value="1"/>
</dbReference>
<dbReference type="SUPFAM" id="SSF52540">
    <property type="entry name" value="P-loop containing nucleoside triphosphate hydrolases"/>
    <property type="match status" value="1"/>
</dbReference>
<dbReference type="PROSITE" id="PS51274">
    <property type="entry name" value="GATASE_COBBQ"/>
    <property type="match status" value="1"/>
</dbReference>
<accession>B9JX68</accession>
<organism>
    <name type="scientific">Allorhizobium ampelinum (strain ATCC BAA-846 / DSM 112012 / S4)</name>
    <name type="common">Agrobacterium vitis (strain S4)</name>
    <dbReference type="NCBI Taxonomy" id="311402"/>
    <lineage>
        <taxon>Bacteria</taxon>
        <taxon>Pseudomonadati</taxon>
        <taxon>Pseudomonadota</taxon>
        <taxon>Alphaproteobacteria</taxon>
        <taxon>Hyphomicrobiales</taxon>
        <taxon>Rhizobiaceae</taxon>
        <taxon>Rhizobium/Agrobacterium group</taxon>
        <taxon>Allorhizobium</taxon>
        <taxon>Allorhizobium ampelinum</taxon>
    </lineage>
</organism>
<sequence length="484" mass="51549">MTRMVMLQGTGSDVGKTVLVAGLCRLARLHGRVVRPFKPQNMSNNAAVADDGGEIGRAQWLQALACGVPSSVHMNPVLLKPQSETGSQIIVQGRVFGQAKGRDYQRLKPQLLGAVLDSFEELKAGADLVIVEGAGSPAEINLRAGDIANMGFATRANVPVVLVGDIDRGGVIASLVGTHAILPEEDRRMISGYIINKFRGDQSLFADGIGAITQYTGWPSFGIVPWLKAAGRLPPEDSVALERLSRSSTGALKIAVPVLSRIANFDDFDPLASEPSVDLVYVRPGEPLPADAALVILPGSKATIGDLADLRAQGWDKDLTLHRRRGGRIIGICGGYQMLGNSVADPLGLEGAPCRVEGLGLLEIDTEMAPEKTVRNSAAHSLEYDMALSGYEIHLGQTDGPDCQRPALTIRGRADGAISADGKVMGTYLHGLFGNDEYRAALLQSFGISNGTVNYRQSVEQALDDLARELESVLDKAWLDQLIG</sequence>
<protein>
    <recommendedName>
        <fullName evidence="1">Cobyric acid synthase</fullName>
    </recommendedName>
</protein>